<gene>
    <name evidence="1" type="primary">hisS</name>
    <name type="ordered locus">FTA_1914</name>
</gene>
<comment type="catalytic activity">
    <reaction evidence="1">
        <text>tRNA(His) + L-histidine + ATP = L-histidyl-tRNA(His) + AMP + diphosphate + H(+)</text>
        <dbReference type="Rhea" id="RHEA:17313"/>
        <dbReference type="Rhea" id="RHEA-COMP:9665"/>
        <dbReference type="Rhea" id="RHEA-COMP:9689"/>
        <dbReference type="ChEBI" id="CHEBI:15378"/>
        <dbReference type="ChEBI" id="CHEBI:30616"/>
        <dbReference type="ChEBI" id="CHEBI:33019"/>
        <dbReference type="ChEBI" id="CHEBI:57595"/>
        <dbReference type="ChEBI" id="CHEBI:78442"/>
        <dbReference type="ChEBI" id="CHEBI:78527"/>
        <dbReference type="ChEBI" id="CHEBI:456215"/>
        <dbReference type="EC" id="6.1.1.21"/>
    </reaction>
</comment>
<comment type="subunit">
    <text evidence="1">Homodimer.</text>
</comment>
<comment type="subcellular location">
    <subcellularLocation>
        <location evidence="1">Cytoplasm</location>
    </subcellularLocation>
</comment>
<comment type="similarity">
    <text evidence="1">Belongs to the class-II aminoacyl-tRNA synthetase family.</text>
</comment>
<reference key="1">
    <citation type="journal article" date="2009" name="PLoS ONE">
        <title>Complete genome sequence of Francisella tularensis subspecies holarctica FTNF002-00.</title>
        <authorList>
            <person name="Barabote R.D."/>
            <person name="Xie G."/>
            <person name="Brettin T.S."/>
            <person name="Hinrichs S.H."/>
            <person name="Fey P.D."/>
            <person name="Jay J.J."/>
            <person name="Engle J.L."/>
            <person name="Godbole S.D."/>
            <person name="Noronha J.M."/>
            <person name="Scheuermann R.H."/>
            <person name="Zhou L.W."/>
            <person name="Lion C."/>
            <person name="Dempsey M.P."/>
        </authorList>
    </citation>
    <scope>NUCLEOTIDE SEQUENCE [LARGE SCALE GENOMIC DNA]</scope>
    <source>
        <strain>FTNF002-00 / FTA</strain>
    </source>
</reference>
<evidence type="ECO:0000255" key="1">
    <source>
        <dbReference type="HAMAP-Rule" id="MF_00127"/>
    </source>
</evidence>
<keyword id="KW-0030">Aminoacyl-tRNA synthetase</keyword>
<keyword id="KW-0067">ATP-binding</keyword>
<keyword id="KW-0963">Cytoplasm</keyword>
<keyword id="KW-0436">Ligase</keyword>
<keyword id="KW-0547">Nucleotide-binding</keyword>
<keyword id="KW-0648">Protein biosynthesis</keyword>
<accession>A7NEI6</accession>
<organism>
    <name type="scientific">Francisella tularensis subsp. holarctica (strain FTNF002-00 / FTA)</name>
    <dbReference type="NCBI Taxonomy" id="458234"/>
    <lineage>
        <taxon>Bacteria</taxon>
        <taxon>Pseudomonadati</taxon>
        <taxon>Pseudomonadota</taxon>
        <taxon>Gammaproteobacteria</taxon>
        <taxon>Thiotrichales</taxon>
        <taxon>Francisellaceae</taxon>
        <taxon>Francisella</taxon>
    </lineage>
</organism>
<dbReference type="EC" id="6.1.1.21" evidence="1"/>
<dbReference type="EMBL" id="CP000803">
    <property type="protein sequence ID" value="ABU62389.1"/>
    <property type="molecule type" value="Genomic_DNA"/>
</dbReference>
<dbReference type="RefSeq" id="WP_003019703.1">
    <property type="nucleotide sequence ID" value="NC_009749.1"/>
</dbReference>
<dbReference type="SMR" id="A7NEI6"/>
<dbReference type="GeneID" id="75264611"/>
<dbReference type="KEGG" id="fta:FTA_1914"/>
<dbReference type="HOGENOM" id="CLU_025113_1_1_6"/>
<dbReference type="GO" id="GO:0005737">
    <property type="term" value="C:cytoplasm"/>
    <property type="evidence" value="ECO:0007669"/>
    <property type="project" value="UniProtKB-SubCell"/>
</dbReference>
<dbReference type="GO" id="GO:0005524">
    <property type="term" value="F:ATP binding"/>
    <property type="evidence" value="ECO:0007669"/>
    <property type="project" value="UniProtKB-UniRule"/>
</dbReference>
<dbReference type="GO" id="GO:0004821">
    <property type="term" value="F:histidine-tRNA ligase activity"/>
    <property type="evidence" value="ECO:0007669"/>
    <property type="project" value="UniProtKB-UniRule"/>
</dbReference>
<dbReference type="GO" id="GO:0006427">
    <property type="term" value="P:histidyl-tRNA aminoacylation"/>
    <property type="evidence" value="ECO:0007669"/>
    <property type="project" value="UniProtKB-UniRule"/>
</dbReference>
<dbReference type="CDD" id="cd00773">
    <property type="entry name" value="HisRS-like_core"/>
    <property type="match status" value="1"/>
</dbReference>
<dbReference type="FunFam" id="3.30.930.10:FF:000005">
    <property type="entry name" value="Histidine--tRNA ligase"/>
    <property type="match status" value="1"/>
</dbReference>
<dbReference type="Gene3D" id="3.40.50.800">
    <property type="entry name" value="Anticodon-binding domain"/>
    <property type="match status" value="1"/>
</dbReference>
<dbReference type="Gene3D" id="3.30.930.10">
    <property type="entry name" value="Bira Bifunctional Protein, Domain 2"/>
    <property type="match status" value="1"/>
</dbReference>
<dbReference type="HAMAP" id="MF_00127">
    <property type="entry name" value="His_tRNA_synth"/>
    <property type="match status" value="1"/>
</dbReference>
<dbReference type="InterPro" id="IPR006195">
    <property type="entry name" value="aa-tRNA-synth_II"/>
</dbReference>
<dbReference type="InterPro" id="IPR045864">
    <property type="entry name" value="aa-tRNA-synth_II/BPL/LPL"/>
</dbReference>
<dbReference type="InterPro" id="IPR004154">
    <property type="entry name" value="Anticodon-bd"/>
</dbReference>
<dbReference type="InterPro" id="IPR036621">
    <property type="entry name" value="Anticodon-bd_dom_sf"/>
</dbReference>
<dbReference type="InterPro" id="IPR015807">
    <property type="entry name" value="His-tRNA-ligase"/>
</dbReference>
<dbReference type="InterPro" id="IPR041715">
    <property type="entry name" value="HisRS-like_core"/>
</dbReference>
<dbReference type="InterPro" id="IPR004516">
    <property type="entry name" value="HisRS/HisZ"/>
</dbReference>
<dbReference type="NCBIfam" id="TIGR00442">
    <property type="entry name" value="hisS"/>
    <property type="match status" value="1"/>
</dbReference>
<dbReference type="PANTHER" id="PTHR43707:SF1">
    <property type="entry name" value="HISTIDINE--TRNA LIGASE, MITOCHONDRIAL-RELATED"/>
    <property type="match status" value="1"/>
</dbReference>
<dbReference type="PANTHER" id="PTHR43707">
    <property type="entry name" value="HISTIDYL-TRNA SYNTHETASE"/>
    <property type="match status" value="1"/>
</dbReference>
<dbReference type="Pfam" id="PF03129">
    <property type="entry name" value="HGTP_anticodon"/>
    <property type="match status" value="1"/>
</dbReference>
<dbReference type="Pfam" id="PF13393">
    <property type="entry name" value="tRNA-synt_His"/>
    <property type="match status" value="1"/>
</dbReference>
<dbReference type="PIRSF" id="PIRSF001549">
    <property type="entry name" value="His-tRNA_synth"/>
    <property type="match status" value="1"/>
</dbReference>
<dbReference type="SUPFAM" id="SSF52954">
    <property type="entry name" value="Class II aaRS ABD-related"/>
    <property type="match status" value="1"/>
</dbReference>
<dbReference type="SUPFAM" id="SSF55681">
    <property type="entry name" value="Class II aaRS and biotin synthetases"/>
    <property type="match status" value="1"/>
</dbReference>
<dbReference type="PROSITE" id="PS50862">
    <property type="entry name" value="AA_TRNA_LIGASE_II"/>
    <property type="match status" value="1"/>
</dbReference>
<feature type="chain" id="PRO_1000016361" description="Histidine--tRNA ligase">
    <location>
        <begin position="1"/>
        <end position="421"/>
    </location>
</feature>
<protein>
    <recommendedName>
        <fullName evidence="1">Histidine--tRNA ligase</fullName>
        <ecNumber evidence="1">6.1.1.21</ecNumber>
    </recommendedName>
    <alternativeName>
        <fullName evidence="1">Histidyl-tRNA synthetase</fullName>
        <shortName evidence="1">HisRS</shortName>
    </alternativeName>
</protein>
<sequence length="421" mass="48184">MSKLTIVRGFNDVLPLDSYKWQFLESKVKLILDRYNYSETRLPIVERSELFHRSVGESSDIVSKETYDFQDRNGDSLTLRPEGTAGCVRMVIENNLATRGQTQKLWYCGPMFRYERPQKGRYRQFYQLGVEAYGFDGIAIDLEVIAIAWSLFKELGISEYVTLELNSLGSSLNRQEYTQALLQYLKPYHAELDEDSIKRLDKNPLRILDSKIEKTQKILANAPKLIDFIDHDLRLRFKQTCQYLDALGVRYKLNENLVRGLDYYTGLVFEWTTDKLGSQSAICAGGRYDGLVENLGGQKTAAIGFAIGMERLLLLLEDLGKLPNQDNACDVFFILDSAQLHQSLAIVENIRQELPQLKIDMDLKFGSFKSQFKKADKSGAKVAIIIGQDELDNGFAGIKFLQQNEEQQQVAFNELINFLER</sequence>
<name>SYH_FRATF</name>
<proteinExistence type="inferred from homology"/>